<proteinExistence type="evidence at protein level"/>
<name>Y2278_ARATH</name>
<evidence type="ECO:0000255" key="1"/>
<evidence type="ECO:0000255" key="2">
    <source>
        <dbReference type="PROSITE-ProRule" id="PRU00159"/>
    </source>
</evidence>
<evidence type="ECO:0000256" key="3">
    <source>
        <dbReference type="SAM" id="MobiDB-lite"/>
    </source>
</evidence>
<evidence type="ECO:0000305" key="4"/>
<sequence>MQISLQIHLSSFTFLLLIFLLPVLSESQVASSESQTLLEIQKQLQYPQVLQSWTDTTNFCHIRPSPSLRIICLHGHVTELTVTGNRTSKLSGSFHKLFTLLTQLSSLKTLSLTSLGISGSLSPKIITKLSPSLESLNLSSNFISGKIPEEIVSLKNLKSLVLRDNMFWGFVSDDLRGLSNLQELDLGGNKLGPEVPSLPSKLTTVSLKNNSFRSKIPEQIKKLNNLQSLDLSSNEFTGSIPEFLFSIPSLQILSLDQNLLSGSLPNSSCTSSKIITLDVSHNLLTGKLPSCYSSKSFSNQTVLFSFNCLSLIGTPNAKYQRPLSFCQNQASKAIAVEPIPKAKDKDSARIKLGLVILIIIGVIILAAILVLLVLIALKRRRSRSEDDPFEVNNSNNERHASDKVSVCSTTTASSKSLPDSRRVPQTMRSAVIGLPPYRVFSLEELEEATNDFDAASLFCEQLYRGCLREGIPVTVRVIKLKQKSLPQSLAQQMEVLSKLRHMHLVSVLGHSIASNQDHNQHAGHTIFIVQEYISSGSLRDFLTNCRKKEVLKWPQRMAIAIGVARGIQFLHMGVAPGIFGNNLKIENIMLDETLTVKISGYTIPLPSKVGEERPQAKKPRSNEDREKEDVYQFGVILLQIITGKVVAAGSSEMGSLKLQLENGLRDEPSVLSSLADPSVKGSYAYESLRTTVEFAINCLCEDQSKRPSIEDVVWNLQYTIQVQQGWRPSSGNHESSMKAIYE</sequence>
<reference key="1">
    <citation type="journal article" date="1999" name="Nature">
        <title>Sequence and analysis of chromosome 2 of the plant Arabidopsis thaliana.</title>
        <authorList>
            <person name="Lin X."/>
            <person name="Kaul S."/>
            <person name="Rounsley S.D."/>
            <person name="Shea T.P."/>
            <person name="Benito M.-I."/>
            <person name="Town C.D."/>
            <person name="Fujii C.Y."/>
            <person name="Mason T.M."/>
            <person name="Bowman C.L."/>
            <person name="Barnstead M.E."/>
            <person name="Feldblyum T.V."/>
            <person name="Buell C.R."/>
            <person name="Ketchum K.A."/>
            <person name="Lee J.J."/>
            <person name="Ronning C.M."/>
            <person name="Koo H.L."/>
            <person name="Moffat K.S."/>
            <person name="Cronin L.A."/>
            <person name="Shen M."/>
            <person name="Pai G."/>
            <person name="Van Aken S."/>
            <person name="Umayam L."/>
            <person name="Tallon L.J."/>
            <person name="Gill J.E."/>
            <person name="Adams M.D."/>
            <person name="Carrera A.J."/>
            <person name="Creasy T.H."/>
            <person name="Goodman H.M."/>
            <person name="Somerville C.R."/>
            <person name="Copenhaver G.P."/>
            <person name="Preuss D."/>
            <person name="Nierman W.C."/>
            <person name="White O."/>
            <person name="Eisen J.A."/>
            <person name="Salzberg S.L."/>
            <person name="Fraser C.M."/>
            <person name="Venter J.C."/>
        </authorList>
    </citation>
    <scope>NUCLEOTIDE SEQUENCE [LARGE SCALE GENOMIC DNA]</scope>
    <source>
        <strain>cv. Columbia</strain>
    </source>
</reference>
<reference key="2">
    <citation type="journal article" date="2017" name="Plant J.">
        <title>Araport11: a complete reannotation of the Arabidopsis thaliana reference genome.</title>
        <authorList>
            <person name="Cheng C.Y."/>
            <person name="Krishnakumar V."/>
            <person name="Chan A.P."/>
            <person name="Thibaud-Nissen F."/>
            <person name="Schobel S."/>
            <person name="Town C.D."/>
        </authorList>
    </citation>
    <scope>GENOME REANNOTATION</scope>
    <source>
        <strain>cv. Columbia</strain>
    </source>
</reference>
<reference key="3">
    <citation type="journal article" date="2010" name="BMC Genomics">
        <title>Genome-wide cloning and sequence analysis of leucine-rich repeat receptor-like protein kinase genes in Arabidopsis thaliana.</title>
        <authorList>
            <person name="Gou X."/>
            <person name="He K."/>
            <person name="Yang H."/>
            <person name="Yuan T."/>
            <person name="Lin H."/>
            <person name="Clouse S.D."/>
            <person name="Li J."/>
        </authorList>
    </citation>
    <scope>NUCLEOTIDE SEQUENCE [LARGE SCALE MRNA]</scope>
    <source>
        <strain>cv. Columbia</strain>
    </source>
</reference>
<reference key="4">
    <citation type="journal article" date="2003" name="Science">
        <title>Empirical analysis of transcriptional activity in the Arabidopsis genome.</title>
        <authorList>
            <person name="Yamada K."/>
            <person name="Lim J."/>
            <person name="Dale J.M."/>
            <person name="Chen H."/>
            <person name="Shinn P."/>
            <person name="Palm C.J."/>
            <person name="Southwick A.M."/>
            <person name="Wu H.C."/>
            <person name="Kim C.J."/>
            <person name="Nguyen M."/>
            <person name="Pham P.K."/>
            <person name="Cheuk R.F."/>
            <person name="Karlin-Newmann G."/>
            <person name="Liu S.X."/>
            <person name="Lam B."/>
            <person name="Sakano H."/>
            <person name="Wu T."/>
            <person name="Yu G."/>
            <person name="Miranda M."/>
            <person name="Quach H.L."/>
            <person name="Tripp M."/>
            <person name="Chang C.H."/>
            <person name="Lee J.M."/>
            <person name="Toriumi M.J."/>
            <person name="Chan M.M."/>
            <person name="Tang C.C."/>
            <person name="Onodera C.S."/>
            <person name="Deng J.M."/>
            <person name="Akiyama K."/>
            <person name="Ansari Y."/>
            <person name="Arakawa T."/>
            <person name="Banh J."/>
            <person name="Banno F."/>
            <person name="Bowser L."/>
            <person name="Brooks S.Y."/>
            <person name="Carninci P."/>
            <person name="Chao Q."/>
            <person name="Choy N."/>
            <person name="Enju A."/>
            <person name="Goldsmith A.D."/>
            <person name="Gurjal M."/>
            <person name="Hansen N.F."/>
            <person name="Hayashizaki Y."/>
            <person name="Johnson-Hopson C."/>
            <person name="Hsuan V.W."/>
            <person name="Iida K."/>
            <person name="Karnes M."/>
            <person name="Khan S."/>
            <person name="Koesema E."/>
            <person name="Ishida J."/>
            <person name="Jiang P.X."/>
            <person name="Jones T."/>
            <person name="Kawai J."/>
            <person name="Kamiya A."/>
            <person name="Meyers C."/>
            <person name="Nakajima M."/>
            <person name="Narusaka M."/>
            <person name="Seki M."/>
            <person name="Sakurai T."/>
            <person name="Satou M."/>
            <person name="Tamse R."/>
            <person name="Vaysberg M."/>
            <person name="Wallender E.K."/>
            <person name="Wong C."/>
            <person name="Yamamura Y."/>
            <person name="Yuan S."/>
            <person name="Shinozaki K."/>
            <person name="Davis R.W."/>
            <person name="Theologis A."/>
            <person name="Ecker J.R."/>
        </authorList>
    </citation>
    <scope>NUCLEOTIDE SEQUENCE [LARGE SCALE MRNA] OF 567-742</scope>
    <source>
        <strain>cv. Columbia</strain>
    </source>
</reference>
<protein>
    <recommendedName>
        <fullName>Probable LRR receptor-like serine/threonine-protein kinase At2g02780</fullName>
        <ecNumber>2.7.11.1</ecNumber>
    </recommendedName>
</protein>
<organism>
    <name type="scientific">Arabidopsis thaliana</name>
    <name type="common">Mouse-ear cress</name>
    <dbReference type="NCBI Taxonomy" id="3702"/>
    <lineage>
        <taxon>Eukaryota</taxon>
        <taxon>Viridiplantae</taxon>
        <taxon>Streptophyta</taxon>
        <taxon>Embryophyta</taxon>
        <taxon>Tracheophyta</taxon>
        <taxon>Spermatophyta</taxon>
        <taxon>Magnoliopsida</taxon>
        <taxon>eudicotyledons</taxon>
        <taxon>Gunneridae</taxon>
        <taxon>Pentapetalae</taxon>
        <taxon>rosids</taxon>
        <taxon>malvids</taxon>
        <taxon>Brassicales</taxon>
        <taxon>Brassicaceae</taxon>
        <taxon>Camelineae</taxon>
        <taxon>Arabidopsis</taxon>
    </lineage>
</organism>
<accession>C0LGJ9</accession>
<accession>O64505</accession>
<accession>Q84WD0</accession>
<comment type="catalytic activity">
    <reaction>
        <text>L-seryl-[protein] + ATP = O-phospho-L-seryl-[protein] + ADP + H(+)</text>
        <dbReference type="Rhea" id="RHEA:17989"/>
        <dbReference type="Rhea" id="RHEA-COMP:9863"/>
        <dbReference type="Rhea" id="RHEA-COMP:11604"/>
        <dbReference type="ChEBI" id="CHEBI:15378"/>
        <dbReference type="ChEBI" id="CHEBI:29999"/>
        <dbReference type="ChEBI" id="CHEBI:30616"/>
        <dbReference type="ChEBI" id="CHEBI:83421"/>
        <dbReference type="ChEBI" id="CHEBI:456216"/>
        <dbReference type="EC" id="2.7.11.1"/>
    </reaction>
</comment>
<comment type="catalytic activity">
    <reaction>
        <text>L-threonyl-[protein] + ATP = O-phospho-L-threonyl-[protein] + ADP + H(+)</text>
        <dbReference type="Rhea" id="RHEA:46608"/>
        <dbReference type="Rhea" id="RHEA-COMP:11060"/>
        <dbReference type="Rhea" id="RHEA-COMP:11605"/>
        <dbReference type="ChEBI" id="CHEBI:15378"/>
        <dbReference type="ChEBI" id="CHEBI:30013"/>
        <dbReference type="ChEBI" id="CHEBI:30616"/>
        <dbReference type="ChEBI" id="CHEBI:61977"/>
        <dbReference type="ChEBI" id="CHEBI:456216"/>
        <dbReference type="EC" id="2.7.11.1"/>
    </reaction>
</comment>
<comment type="interaction">
    <interactant intactId="EBI-20651541">
        <id>C0LGJ9</id>
    </interactant>
    <interactant intactId="EBI-17126713">
        <id>C0LGE4</id>
        <label>At1g12460</label>
    </interactant>
    <organismsDiffer>false</organismsDiffer>
    <experiments>2</experiments>
</comment>
<comment type="interaction">
    <interactant intactId="EBI-20651541">
        <id>C0LGJ9</id>
    </interactant>
    <interactant intactId="EBI-20651385">
        <id>Q9SH71</id>
        <label>At1g64210</label>
    </interactant>
    <organismsDiffer>false</organismsDiffer>
    <experiments>2</experiments>
</comment>
<comment type="interaction">
    <interactant intactId="EBI-20651541">
        <id>C0LGJ9</id>
    </interactant>
    <interactant intactId="EBI-16956175">
        <id>Q9LRT1</id>
        <label>At3g28040</label>
    </interactant>
    <organismsDiffer>false</organismsDiffer>
    <experiments>2</experiments>
</comment>
<comment type="interaction">
    <interactant intactId="EBI-20651541">
        <id>C0LGJ9</id>
    </interactant>
    <interactant intactId="EBI-16955302">
        <id>C0LGS2</id>
        <label>At4g36180</label>
    </interactant>
    <organismsDiffer>false</organismsDiffer>
    <experiments>2</experiments>
</comment>
<comment type="interaction">
    <interactant intactId="EBI-20651541">
        <id>C0LGJ9</id>
    </interactant>
    <interactant intactId="EBI-16955335">
        <id>C0LGS3</id>
        <label>At4g37250</label>
    </interactant>
    <organismsDiffer>false</organismsDiffer>
    <experiments>2</experiments>
</comment>
<comment type="interaction">
    <interactant intactId="EBI-20651541">
        <id>C0LGJ9</id>
    </interactant>
    <interactant intactId="EBI-20661308">
        <id>A0A1P8B6S7</id>
        <label>At4g39270</label>
    </interactant>
    <organismsDiffer>false</organismsDiffer>
    <experiments>2</experiments>
</comment>
<comment type="interaction">
    <interactant intactId="EBI-20651541">
        <id>C0LGJ9</id>
    </interactant>
    <interactant intactId="EBI-16945916">
        <id>Q0WR59</id>
        <label>At5g10020</label>
    </interactant>
    <organismsDiffer>false</organismsDiffer>
    <experiments>2</experiments>
</comment>
<comment type="interaction">
    <interactant intactId="EBI-20651541">
        <id>C0LGJ9</id>
    </interactant>
    <interactant intactId="EBI-20661217">
        <id>C0LGU1</id>
        <label>At5g37450</label>
    </interactant>
    <organismsDiffer>false</organismsDiffer>
    <experiments>2</experiments>
</comment>
<comment type="interaction">
    <interactant intactId="EBI-20651541">
        <id>C0LGJ9</id>
    </interactant>
    <interactant intactId="EBI-20653342">
        <id>A0A178UFM8</id>
        <label>At5g51560</label>
    </interactant>
    <organismsDiffer>false</organismsDiffer>
    <experiments>2</experiments>
</comment>
<comment type="interaction">
    <interactant intactId="EBI-20651541">
        <id>C0LGJ9</id>
    </interactant>
    <interactant intactId="EBI-20655829">
        <id>A0A178VQN9</id>
        <label>AXX17_At2g39620</label>
    </interactant>
    <organismsDiffer>false</organismsDiffer>
    <experiments>2</experiments>
</comment>
<comment type="interaction">
    <interactant intactId="EBI-20651541">
        <id>C0LGJ9</id>
    </interactant>
    <interactant intactId="EBI-20661274">
        <id>A0A178UAF6</id>
        <label>AXX17_At5g67350</label>
    </interactant>
    <organismsDiffer>false</organismsDiffer>
    <experiments>2</experiments>
</comment>
<comment type="interaction">
    <interactant intactId="EBI-20651541">
        <id>C0LGJ9</id>
    </interactant>
    <interactant intactId="EBI-16933791">
        <id>Q9M2Z1</id>
        <label>BAM2</label>
    </interactant>
    <organismsDiffer>false</organismsDiffer>
    <experiments>2</experiments>
</comment>
<comment type="interaction">
    <interactant intactId="EBI-20651541">
        <id>C0LGJ9</id>
    </interactant>
    <interactant intactId="EBI-16896366">
        <id>C0LGF4</id>
        <label>FEI1</label>
    </interactant>
    <organismsDiffer>false</organismsDiffer>
    <experiments>2</experiments>
</comment>
<comment type="interaction">
    <interactant intactId="EBI-20651541">
        <id>C0LGJ9</id>
    </interactant>
    <interactant intactId="EBI-16921113">
        <id>C0LGL9</id>
        <label>FEI2</label>
    </interactant>
    <organismsDiffer>false</organismsDiffer>
    <experiments>2</experiments>
</comment>
<comment type="interaction">
    <interactant intactId="EBI-20651541">
        <id>C0LGJ9</id>
    </interactant>
    <interactant intactId="EBI-20652801">
        <id>C0LGN2</id>
        <label>LRR-RLK</label>
    </interactant>
    <organismsDiffer>false</organismsDiffer>
    <experiments>2</experiments>
</comment>
<comment type="interaction">
    <interactant intactId="EBI-20651541">
        <id>C0LGJ9</id>
    </interactant>
    <interactant intactId="EBI-20651518">
        <id>C0LGN7</id>
        <label>LRR-RLK</label>
    </interactant>
    <organismsDiffer>false</organismsDiffer>
    <experiments>2</experiments>
</comment>
<comment type="interaction">
    <interactant intactId="EBI-20651541">
        <id>C0LGJ9</id>
    </interactant>
    <interactant intactId="EBI-17071528">
        <id>Q9FRI1</id>
        <label>LRR-RLK</label>
    </interactant>
    <organismsDiffer>false</organismsDiffer>
    <experiments>2</experiments>
</comment>
<comment type="interaction">
    <interactant intactId="EBI-20651541">
        <id>C0LGJ9</id>
    </interactant>
    <interactant intactId="EBI-17121474">
        <id>Q93ZS4</id>
        <label>NIK3</label>
    </interactant>
    <organismsDiffer>false</organismsDiffer>
    <experiments>2</experiments>
</comment>
<comment type="interaction">
    <interactant intactId="EBI-20651541">
        <id>C0LGJ9</id>
    </interactant>
    <interactant intactId="EBI-20652612">
        <id>Q9FZ59</id>
        <label>PEPR2</label>
    </interactant>
    <organismsDiffer>false</organismsDiffer>
    <experiments>2</experiments>
</comment>
<comment type="interaction">
    <interactant intactId="EBI-20651541">
        <id>C0LGJ9</id>
    </interactant>
    <interactant intactId="EBI-16914400">
        <id>Q9LPT1</id>
        <label>PRK5</label>
    </interactant>
    <organismsDiffer>false</organismsDiffer>
    <experiments>2</experiments>
</comment>
<comment type="interaction">
    <interactant intactId="EBI-20651541">
        <id>C0LGJ9</id>
    </interactant>
    <interactant intactId="EBI-1238200">
        <id>Q9LZV7</id>
        <label>PXC2</label>
    </interactant>
    <organismsDiffer>false</organismsDiffer>
    <experiments>2</experiments>
</comment>
<comment type="interaction">
    <interactant intactId="EBI-20651541">
        <id>C0LGJ9</id>
    </interactant>
    <interactant intactId="EBI-20651307">
        <id>F4I2N7-2</id>
        <label>RLK7</label>
    </interactant>
    <organismsDiffer>false</organismsDiffer>
    <experiments>2</experiments>
</comment>
<comment type="interaction">
    <interactant intactId="EBI-20651541">
        <id>C0LGJ9</id>
    </interactant>
    <interactant intactId="EBI-20661246">
        <id>O82318</id>
        <label>SKM1</label>
    </interactant>
    <organismsDiffer>false</organismsDiffer>
    <experiments>2</experiments>
</comment>
<comment type="interaction">
    <interactant intactId="EBI-20651541">
        <id>C0LGJ9</id>
    </interactant>
    <interactant intactId="EBI-16905883">
        <id>Q9SKB2</id>
        <label>SOBIR1</label>
    </interactant>
    <organismsDiffer>false</organismsDiffer>
    <experiments>2</experiments>
</comment>
<comment type="interaction">
    <interactant intactId="EBI-20651541">
        <id>C0LGJ9</id>
    </interactant>
    <interactant intactId="EBI-2023970">
        <id>P43298</id>
        <label>TMK1</label>
    </interactant>
    <organismsDiffer>false</organismsDiffer>
    <experiments>2</experiments>
</comment>
<comment type="interaction">
    <interactant intactId="EBI-20651541">
        <id>C0LGJ9</id>
    </interactant>
    <interactant intactId="EBI-20652836">
        <id>Q9FYK0</id>
        <label>TMK2</label>
    </interactant>
    <organismsDiffer>false</organismsDiffer>
    <experiments>2</experiments>
</comment>
<comment type="interaction">
    <interactant intactId="EBI-20651541">
        <id>C0LGJ9</id>
    </interactant>
    <interactant intactId="EBI-16896864">
        <id>Q9SIT1</id>
        <label>TMK3</label>
    </interactant>
    <organismsDiffer>false</organismsDiffer>
    <experiments>2</experiments>
</comment>
<comment type="interaction">
    <interactant intactId="EBI-20651541">
        <id>C0LGJ9</id>
    </interactant>
    <interactant intactId="EBI-20658163">
        <id>Q8GY50</id>
        <label>VRLK1</label>
    </interactant>
    <organismsDiffer>false</organismsDiffer>
    <experiments>2</experiments>
</comment>
<comment type="subcellular location">
    <subcellularLocation>
        <location evidence="4">Membrane</location>
        <topology evidence="4">Single-pass type I membrane protein</topology>
    </subcellularLocation>
</comment>
<comment type="similarity">
    <text evidence="2">Belongs to the protein kinase superfamily. Ser/Thr protein kinase family.</text>
</comment>
<comment type="sequence caution" evidence="4">
    <conflict type="erroneous gene model prediction">
        <sequence resource="EMBL-CDS" id="AAC05344"/>
    </conflict>
</comment>
<gene>
    <name type="ordered locus">At2g02780</name>
    <name type="ORF">T20F6.8</name>
</gene>
<dbReference type="EC" id="2.7.11.1"/>
<dbReference type="EMBL" id="AC002521">
    <property type="protein sequence ID" value="AAC05344.1"/>
    <property type="status" value="ALT_SEQ"/>
    <property type="molecule type" value="Genomic_DNA"/>
</dbReference>
<dbReference type="EMBL" id="CP002685">
    <property type="protein sequence ID" value="AEC05623.1"/>
    <property type="molecule type" value="Genomic_DNA"/>
</dbReference>
<dbReference type="EMBL" id="FJ708689">
    <property type="protein sequence ID" value="ACN59284.1"/>
    <property type="molecule type" value="mRNA"/>
</dbReference>
<dbReference type="EMBL" id="BT003963">
    <property type="protein sequence ID" value="AAO42008.1"/>
    <property type="molecule type" value="mRNA"/>
</dbReference>
<dbReference type="PIR" id="T00850">
    <property type="entry name" value="T00850"/>
</dbReference>
<dbReference type="RefSeq" id="NP_178381.3">
    <property type="nucleotide sequence ID" value="NM_126333.4"/>
</dbReference>
<dbReference type="SMR" id="C0LGJ9"/>
<dbReference type="BioGRID" id="209">
    <property type="interactions" value="47"/>
</dbReference>
<dbReference type="FunCoup" id="C0LGJ9">
    <property type="interactions" value="447"/>
</dbReference>
<dbReference type="IntAct" id="C0LGJ9">
    <property type="interactions" value="74"/>
</dbReference>
<dbReference type="STRING" id="3702.C0LGJ9"/>
<dbReference type="GlyGen" id="C0LGJ9">
    <property type="glycosylation" value="5 sites"/>
</dbReference>
<dbReference type="PaxDb" id="3702-AT2G02780.1"/>
<dbReference type="ProteomicsDB" id="243188"/>
<dbReference type="EnsemblPlants" id="AT2G02780.1">
    <property type="protein sequence ID" value="AT2G02780.1"/>
    <property type="gene ID" value="AT2G02780"/>
</dbReference>
<dbReference type="GeneID" id="814807"/>
<dbReference type="Gramene" id="AT2G02780.1">
    <property type="protein sequence ID" value="AT2G02780.1"/>
    <property type="gene ID" value="AT2G02780"/>
</dbReference>
<dbReference type="KEGG" id="ath:AT2G02780"/>
<dbReference type="Araport" id="AT2G02780"/>
<dbReference type="TAIR" id="AT2G02780"/>
<dbReference type="eggNOG" id="ENOG502QTFC">
    <property type="taxonomic scope" value="Eukaryota"/>
</dbReference>
<dbReference type="HOGENOM" id="CLU_000288_108_0_1"/>
<dbReference type="InParanoid" id="C0LGJ9"/>
<dbReference type="OMA" id="YGAVPEH"/>
<dbReference type="PhylomeDB" id="C0LGJ9"/>
<dbReference type="PRO" id="PR:C0LGJ9"/>
<dbReference type="Proteomes" id="UP000006548">
    <property type="component" value="Chromosome 2"/>
</dbReference>
<dbReference type="ExpressionAtlas" id="C0LGJ9">
    <property type="expression patterns" value="baseline and differential"/>
</dbReference>
<dbReference type="GO" id="GO:0016020">
    <property type="term" value="C:membrane"/>
    <property type="evidence" value="ECO:0007669"/>
    <property type="project" value="UniProtKB-SubCell"/>
</dbReference>
<dbReference type="GO" id="GO:0005524">
    <property type="term" value="F:ATP binding"/>
    <property type="evidence" value="ECO:0007669"/>
    <property type="project" value="UniProtKB-KW"/>
</dbReference>
<dbReference type="GO" id="GO:0106310">
    <property type="term" value="F:protein serine kinase activity"/>
    <property type="evidence" value="ECO:0007669"/>
    <property type="project" value="RHEA"/>
</dbReference>
<dbReference type="GO" id="GO:0004674">
    <property type="term" value="F:protein serine/threonine kinase activity"/>
    <property type="evidence" value="ECO:0007669"/>
    <property type="project" value="UniProtKB-KW"/>
</dbReference>
<dbReference type="FunFam" id="3.80.10.10:FF:000041">
    <property type="entry name" value="LRR receptor-like serine/threonine-protein kinase ERECTA"/>
    <property type="match status" value="1"/>
</dbReference>
<dbReference type="FunFam" id="3.80.10.10:FF:000673">
    <property type="entry name" value="Probable LRR receptor-like serine/threonine-protein kinase At2g02780"/>
    <property type="match status" value="1"/>
</dbReference>
<dbReference type="FunFam" id="1.10.510.10:FF:000431">
    <property type="entry name" value="Putative inactive leucine-rich repeat receptor-like protein kinase"/>
    <property type="match status" value="1"/>
</dbReference>
<dbReference type="Gene3D" id="3.30.200.20">
    <property type="entry name" value="Phosphorylase Kinase, domain 1"/>
    <property type="match status" value="1"/>
</dbReference>
<dbReference type="Gene3D" id="3.80.10.10">
    <property type="entry name" value="Ribonuclease Inhibitor"/>
    <property type="match status" value="2"/>
</dbReference>
<dbReference type="Gene3D" id="1.10.510.10">
    <property type="entry name" value="Transferase(Phosphotransferase) domain 1"/>
    <property type="match status" value="1"/>
</dbReference>
<dbReference type="InterPro" id="IPR011009">
    <property type="entry name" value="Kinase-like_dom_sf"/>
</dbReference>
<dbReference type="InterPro" id="IPR001611">
    <property type="entry name" value="Leu-rich_rpt"/>
</dbReference>
<dbReference type="InterPro" id="IPR003591">
    <property type="entry name" value="Leu-rich_rpt_typical-subtyp"/>
</dbReference>
<dbReference type="InterPro" id="IPR032675">
    <property type="entry name" value="LRR_dom_sf"/>
</dbReference>
<dbReference type="InterPro" id="IPR046959">
    <property type="entry name" value="PRK1-6/SRF4-like"/>
</dbReference>
<dbReference type="InterPro" id="IPR000719">
    <property type="entry name" value="Prot_kinase_dom"/>
</dbReference>
<dbReference type="InterPro" id="IPR001245">
    <property type="entry name" value="Ser-Thr/Tyr_kinase_cat_dom"/>
</dbReference>
<dbReference type="PANTHER" id="PTHR48007">
    <property type="entry name" value="LEUCINE-RICH REPEAT RECEPTOR-LIKE PROTEIN KINASE PXC1"/>
    <property type="match status" value="1"/>
</dbReference>
<dbReference type="PANTHER" id="PTHR48007:SF76">
    <property type="entry name" value="OS03G0145102 PROTEIN"/>
    <property type="match status" value="1"/>
</dbReference>
<dbReference type="Pfam" id="PF13855">
    <property type="entry name" value="LRR_8"/>
    <property type="match status" value="2"/>
</dbReference>
<dbReference type="Pfam" id="PF07714">
    <property type="entry name" value="PK_Tyr_Ser-Thr"/>
    <property type="match status" value="1"/>
</dbReference>
<dbReference type="SMART" id="SM00369">
    <property type="entry name" value="LRR_TYP"/>
    <property type="match status" value="3"/>
</dbReference>
<dbReference type="SUPFAM" id="SSF52058">
    <property type="entry name" value="L domain-like"/>
    <property type="match status" value="1"/>
</dbReference>
<dbReference type="SUPFAM" id="SSF56112">
    <property type="entry name" value="Protein kinase-like (PK-like)"/>
    <property type="match status" value="1"/>
</dbReference>
<dbReference type="PROSITE" id="PS51450">
    <property type="entry name" value="LRR"/>
    <property type="match status" value="5"/>
</dbReference>
<dbReference type="PROSITE" id="PS50011">
    <property type="entry name" value="PROTEIN_KINASE_DOM"/>
    <property type="match status" value="1"/>
</dbReference>
<keyword id="KW-0067">ATP-binding</keyword>
<keyword id="KW-0325">Glycoprotein</keyword>
<keyword id="KW-0418">Kinase</keyword>
<keyword id="KW-0433">Leucine-rich repeat</keyword>
<keyword id="KW-0472">Membrane</keyword>
<keyword id="KW-0547">Nucleotide-binding</keyword>
<keyword id="KW-0675">Receptor</keyword>
<keyword id="KW-1185">Reference proteome</keyword>
<keyword id="KW-0677">Repeat</keyword>
<keyword id="KW-0723">Serine/threonine-protein kinase</keyword>
<keyword id="KW-0732">Signal</keyword>
<keyword id="KW-0808">Transferase</keyword>
<keyword id="KW-0812">Transmembrane</keyword>
<keyword id="KW-1133">Transmembrane helix</keyword>
<feature type="signal peptide" evidence="1">
    <location>
        <begin position="1"/>
        <end position="25"/>
    </location>
</feature>
<feature type="chain" id="PRO_0000387549" description="Probable LRR receptor-like serine/threonine-protein kinase At2g02780">
    <location>
        <begin position="26"/>
        <end position="742"/>
    </location>
</feature>
<feature type="topological domain" description="Extracellular" evidence="1">
    <location>
        <begin position="26"/>
        <end position="354"/>
    </location>
</feature>
<feature type="transmembrane region" description="Helical" evidence="1">
    <location>
        <begin position="355"/>
        <end position="375"/>
    </location>
</feature>
<feature type="topological domain" description="Cytoplasmic" evidence="1">
    <location>
        <begin position="376"/>
        <end position="742"/>
    </location>
</feature>
<feature type="repeat" description="LRR 1">
    <location>
        <begin position="74"/>
        <end position="96"/>
    </location>
</feature>
<feature type="repeat" description="LRR 2">
    <location>
        <begin position="104"/>
        <end position="128"/>
    </location>
</feature>
<feature type="repeat" description="LRR 3">
    <location>
        <begin position="130"/>
        <end position="154"/>
    </location>
</feature>
<feature type="repeat" description="LRR 4">
    <location>
        <begin position="156"/>
        <end position="177"/>
    </location>
</feature>
<feature type="repeat" description="LRR 5">
    <location>
        <begin position="178"/>
        <end position="204"/>
    </location>
</feature>
<feature type="repeat" description="LRR 6">
    <location>
        <begin position="206"/>
        <end position="223"/>
    </location>
</feature>
<feature type="repeat" description="LRR 7">
    <location>
        <begin position="224"/>
        <end position="247"/>
    </location>
</feature>
<feature type="repeat" description="LRR 8">
    <location>
        <begin position="249"/>
        <end position="271"/>
    </location>
</feature>
<feature type="repeat" description="LRR 9">
    <location>
        <begin position="273"/>
        <end position="294"/>
    </location>
</feature>
<feature type="domain" description="Protein kinase" evidence="2">
    <location>
        <begin position="426"/>
        <end position="720"/>
    </location>
</feature>
<feature type="region of interest" description="Disordered" evidence="3">
    <location>
        <begin position="386"/>
        <end position="424"/>
    </location>
</feature>
<feature type="compositionally biased region" description="Polar residues" evidence="3">
    <location>
        <begin position="406"/>
        <end position="417"/>
    </location>
</feature>
<feature type="glycosylation site" description="N-linked (GlcNAc...) asparagine" evidence="1">
    <location>
        <position position="85"/>
    </location>
</feature>
<feature type="glycosylation site" description="N-linked (GlcNAc...) asparagine" evidence="1">
    <location>
        <position position="137"/>
    </location>
</feature>
<feature type="glycosylation site" description="N-linked (GlcNAc...) asparagine" evidence="1">
    <location>
        <position position="209"/>
    </location>
</feature>
<feature type="glycosylation site" description="N-linked (GlcNAc...) asparagine" evidence="1">
    <location>
        <position position="266"/>
    </location>
</feature>
<feature type="glycosylation site" description="N-linked (GlcNAc...) asparagine" evidence="1">
    <location>
        <position position="299"/>
    </location>
</feature>